<reference key="1">
    <citation type="submission" date="2007-03" db="EMBL/GenBank/DDBJ databases">
        <title>Complete sequence of Desulfotomaculum reducens MI-1.</title>
        <authorList>
            <consortium name="US DOE Joint Genome Institute"/>
            <person name="Copeland A."/>
            <person name="Lucas S."/>
            <person name="Lapidus A."/>
            <person name="Barry K."/>
            <person name="Detter J.C."/>
            <person name="Glavina del Rio T."/>
            <person name="Hammon N."/>
            <person name="Israni S."/>
            <person name="Dalin E."/>
            <person name="Tice H."/>
            <person name="Pitluck S."/>
            <person name="Sims D."/>
            <person name="Brettin T."/>
            <person name="Bruce D."/>
            <person name="Han C."/>
            <person name="Tapia R."/>
            <person name="Schmutz J."/>
            <person name="Larimer F."/>
            <person name="Land M."/>
            <person name="Hauser L."/>
            <person name="Kyrpides N."/>
            <person name="Kim E."/>
            <person name="Tebo B.M."/>
            <person name="Richardson P."/>
        </authorList>
    </citation>
    <scope>NUCLEOTIDE SEQUENCE [LARGE SCALE GENOMIC DNA]</scope>
    <source>
        <strain>ATCC BAA-1160 / DSM 100696 / MI-1</strain>
    </source>
</reference>
<protein>
    <recommendedName>
        <fullName evidence="1">UPF0210 protein Dred_1672</fullName>
    </recommendedName>
</protein>
<evidence type="ECO:0000255" key="1">
    <source>
        <dbReference type="HAMAP-Rule" id="MF_01221"/>
    </source>
</evidence>
<name>Y1672_DESRM</name>
<dbReference type="EMBL" id="CP000612">
    <property type="protein sequence ID" value="ABO50200.1"/>
    <property type="molecule type" value="Genomic_DNA"/>
</dbReference>
<dbReference type="RefSeq" id="WP_011878015.1">
    <property type="nucleotide sequence ID" value="NC_009253.1"/>
</dbReference>
<dbReference type="SMR" id="A4J547"/>
<dbReference type="STRING" id="349161.Dred_1672"/>
<dbReference type="KEGG" id="drm:Dred_1672"/>
<dbReference type="eggNOG" id="COG2848">
    <property type="taxonomic scope" value="Bacteria"/>
</dbReference>
<dbReference type="HOGENOM" id="CLU_048704_0_0_9"/>
<dbReference type="OrthoDB" id="9763001at2"/>
<dbReference type="Proteomes" id="UP000001556">
    <property type="component" value="Chromosome"/>
</dbReference>
<dbReference type="CDD" id="cd08025">
    <property type="entry name" value="RNR_PFL_like_DUF711"/>
    <property type="match status" value="1"/>
</dbReference>
<dbReference type="Gene3D" id="3.20.70.20">
    <property type="match status" value="1"/>
</dbReference>
<dbReference type="HAMAP" id="MF_01221">
    <property type="entry name" value="UPF0210"/>
    <property type="match status" value="1"/>
</dbReference>
<dbReference type="InterPro" id="IPR007841">
    <property type="entry name" value="UPF0210"/>
</dbReference>
<dbReference type="NCBIfam" id="NF003700">
    <property type="entry name" value="PRK05313.1"/>
    <property type="match status" value="1"/>
</dbReference>
<dbReference type="PANTHER" id="PTHR37560:SF1">
    <property type="entry name" value="UPF0210 PROTEIN MJ1665"/>
    <property type="match status" value="1"/>
</dbReference>
<dbReference type="PANTHER" id="PTHR37560">
    <property type="entry name" value="UPF0210 PROTEIN SPR0218"/>
    <property type="match status" value="1"/>
</dbReference>
<dbReference type="Pfam" id="PF05167">
    <property type="entry name" value="DUF711"/>
    <property type="match status" value="1"/>
</dbReference>
<dbReference type="SUPFAM" id="SSF51998">
    <property type="entry name" value="PFL-like glycyl radical enzymes"/>
    <property type="match status" value="1"/>
</dbReference>
<comment type="subunit">
    <text evidence="1">Homodimer.</text>
</comment>
<comment type="similarity">
    <text evidence="1">Belongs to the UPF0210 family.</text>
</comment>
<keyword id="KW-1185">Reference proteome</keyword>
<sequence>MYSINEVLETIRMVQEENLDIRTITMGISLRDCADANAAKACQRIYDKITTQAANLVKAGEEIEREYGIPIINKRISVTPISLVAESSDANNYTPFAEAMDRAAKEVGVNFIGGFSALVHKGFTKGDRILINSIPEALATTERVCSSVNVGSTKDGINMDAVYRMGQVVKECAERTADKDGLACAKLVVFCNVPEDNPFMAGAFHGIGEAECVINVGVSGPGVVKNAVEKVKGTDFGTLAETVKKTAFKITRMGELVGRAAAKKLGVPFGIVDLSLAPTPAVGDSVAEVLEAMGLECCGTHGTTAALALLNDAVKKGGAMASSYVGGLSGAFIPLSEDAGMIRAAECGILTLEKLEAMTCVCSVGLDMIAIPGDTTAETLAAIIADEMAIGMVNFKTTAVRIIPAPGKTVGDRVEFGGLLGHAPIIPVKQAGAQEFVTRGGRIPAPIQSLKN</sequence>
<accession>A4J547</accession>
<gene>
    <name type="ordered locus">Dred_1672</name>
</gene>
<feature type="chain" id="PRO_1000085663" description="UPF0210 protein Dred_1672">
    <location>
        <begin position="1"/>
        <end position="452"/>
    </location>
</feature>
<organism>
    <name type="scientific">Desulforamulus reducens (strain ATCC BAA-1160 / DSM 100696 / MI-1)</name>
    <name type="common">Desulfotomaculum reducens</name>
    <dbReference type="NCBI Taxonomy" id="349161"/>
    <lineage>
        <taxon>Bacteria</taxon>
        <taxon>Bacillati</taxon>
        <taxon>Bacillota</taxon>
        <taxon>Clostridia</taxon>
        <taxon>Eubacteriales</taxon>
        <taxon>Peptococcaceae</taxon>
        <taxon>Desulforamulus</taxon>
    </lineage>
</organism>
<proteinExistence type="inferred from homology"/>